<dbReference type="EC" id="1.2.1.71" evidence="1"/>
<dbReference type="EMBL" id="CP000075">
    <property type="protein sequence ID" value="AAY38594.1"/>
    <property type="molecule type" value="Genomic_DNA"/>
</dbReference>
<dbReference type="RefSeq" id="YP_236632.1">
    <property type="nucleotide sequence ID" value="NC_007005.1"/>
</dbReference>
<dbReference type="SMR" id="Q4ZQH8"/>
<dbReference type="STRING" id="205918.Psyr_3562"/>
<dbReference type="KEGG" id="psb:Psyr_3562"/>
<dbReference type="PATRIC" id="fig|205918.7.peg.3648"/>
<dbReference type="eggNOG" id="COG1012">
    <property type="taxonomic scope" value="Bacteria"/>
</dbReference>
<dbReference type="HOGENOM" id="CLU_005391_1_0_6"/>
<dbReference type="OrthoDB" id="9812625at2"/>
<dbReference type="UniPathway" id="UPA00185">
    <property type="reaction ID" value="UER00282"/>
</dbReference>
<dbReference type="Proteomes" id="UP000000426">
    <property type="component" value="Chromosome"/>
</dbReference>
<dbReference type="GO" id="GO:0043824">
    <property type="term" value="F:succinylglutamate-semialdehyde dehydrogenase activity"/>
    <property type="evidence" value="ECO:0007669"/>
    <property type="project" value="UniProtKB-EC"/>
</dbReference>
<dbReference type="GO" id="GO:0019544">
    <property type="term" value="P:arginine catabolic process to glutamate"/>
    <property type="evidence" value="ECO:0007669"/>
    <property type="project" value="UniProtKB-UniRule"/>
</dbReference>
<dbReference type="GO" id="GO:0019545">
    <property type="term" value="P:arginine catabolic process to succinate"/>
    <property type="evidence" value="ECO:0007669"/>
    <property type="project" value="UniProtKB-UniRule"/>
</dbReference>
<dbReference type="CDD" id="cd07095">
    <property type="entry name" value="ALDH_SGSD_AstD"/>
    <property type="match status" value="1"/>
</dbReference>
<dbReference type="FunFam" id="3.40.309.10:FF:000013">
    <property type="entry name" value="N-succinylglutamate 5-semialdehyde dehydrogenase"/>
    <property type="match status" value="1"/>
</dbReference>
<dbReference type="FunFam" id="3.40.605.10:FF:000010">
    <property type="entry name" value="N-succinylglutamate 5-semialdehyde dehydrogenase"/>
    <property type="match status" value="1"/>
</dbReference>
<dbReference type="Gene3D" id="3.40.605.10">
    <property type="entry name" value="Aldehyde Dehydrogenase, Chain A, domain 1"/>
    <property type="match status" value="1"/>
</dbReference>
<dbReference type="Gene3D" id="3.40.309.10">
    <property type="entry name" value="Aldehyde Dehydrogenase, Chain A, domain 2"/>
    <property type="match status" value="1"/>
</dbReference>
<dbReference type="HAMAP" id="MF_01174">
    <property type="entry name" value="Aldedh_AstD"/>
    <property type="match status" value="1"/>
</dbReference>
<dbReference type="InterPro" id="IPR016161">
    <property type="entry name" value="Ald_DH/histidinol_DH"/>
</dbReference>
<dbReference type="InterPro" id="IPR016163">
    <property type="entry name" value="Ald_DH_C"/>
</dbReference>
<dbReference type="InterPro" id="IPR016160">
    <property type="entry name" value="Ald_DH_CS_CYS"/>
</dbReference>
<dbReference type="InterPro" id="IPR029510">
    <property type="entry name" value="Ald_DH_CS_GLU"/>
</dbReference>
<dbReference type="InterPro" id="IPR016162">
    <property type="entry name" value="Ald_DH_N"/>
</dbReference>
<dbReference type="InterPro" id="IPR015590">
    <property type="entry name" value="Aldehyde_DH_dom"/>
</dbReference>
<dbReference type="InterPro" id="IPR017649">
    <property type="entry name" value="SuccinylGlu_semiald_DH_AstD"/>
</dbReference>
<dbReference type="NCBIfam" id="TIGR03240">
    <property type="entry name" value="arg_catab_astD"/>
    <property type="match status" value="1"/>
</dbReference>
<dbReference type="NCBIfam" id="NF006992">
    <property type="entry name" value="PRK09457.1"/>
    <property type="match status" value="1"/>
</dbReference>
<dbReference type="PANTHER" id="PTHR11699">
    <property type="entry name" value="ALDEHYDE DEHYDROGENASE-RELATED"/>
    <property type="match status" value="1"/>
</dbReference>
<dbReference type="Pfam" id="PF00171">
    <property type="entry name" value="Aldedh"/>
    <property type="match status" value="1"/>
</dbReference>
<dbReference type="SUPFAM" id="SSF53720">
    <property type="entry name" value="ALDH-like"/>
    <property type="match status" value="1"/>
</dbReference>
<dbReference type="PROSITE" id="PS00070">
    <property type="entry name" value="ALDEHYDE_DEHYDR_CYS"/>
    <property type="match status" value="1"/>
</dbReference>
<dbReference type="PROSITE" id="PS00687">
    <property type="entry name" value="ALDEHYDE_DEHYDR_GLU"/>
    <property type="match status" value="1"/>
</dbReference>
<keyword id="KW-0056">Arginine metabolism</keyword>
<keyword id="KW-0520">NAD</keyword>
<keyword id="KW-0560">Oxidoreductase</keyword>
<proteinExistence type="inferred from homology"/>
<evidence type="ECO:0000255" key="1">
    <source>
        <dbReference type="HAMAP-Rule" id="MF_01174"/>
    </source>
</evidence>
<sequence length="488" mass="51332">MNSLYIAGVWQDGQGEVVNSLNPVTQQVLWSGRGASAAQVEQAVQAARQAFPGWALLSLDQRIAVLEAFAARLKHHADALAQCIGEETGKPLWESATEVTSMVNKIAISVQSYRERTGEKSGPLGDATAVLRHKPHGVVAVFGPYNFPGHLPNGHIVPALLAGNVVLFKPSELTPKVAELTVKCWIEAGLPAGVLNLLQGGRETGIALAANPGIDGLFFTGSSRTGNALHQQFAGRPDKILALEMGGNNPLIVDQVQDIDAAVYTIIQSAFISAGQRCTCARRLLVPEGDWGDALLARLVGVSATIEAGAFDQQPAPFMGSVISLEAARALLDAQRNLLANGALTLLEMRQPQPGAALLTPGIIDVSAVPERPDEELFGPLLQVIRYAGFDAAIAEANATRYGLAAGLLSDSEARYQQFWLHSRAGIVNWNKPLTGAASSAPFGGVGASGNHRASAYYAADYCAYPVASLEAGSLTLPATLTPGIRLS</sequence>
<feature type="chain" id="PRO_0000262418" description="N-succinylglutamate 5-semialdehyde dehydrogenase">
    <location>
        <begin position="1"/>
        <end position="488"/>
    </location>
</feature>
<feature type="active site" evidence="1">
    <location>
        <position position="244"/>
    </location>
</feature>
<feature type="active site" evidence="1">
    <location>
        <position position="278"/>
    </location>
</feature>
<feature type="binding site" evidence="1">
    <location>
        <begin position="221"/>
        <end position="226"/>
    </location>
    <ligand>
        <name>NAD(+)</name>
        <dbReference type="ChEBI" id="CHEBI:57540"/>
    </ligand>
</feature>
<name>ASTD_PSEU2</name>
<protein>
    <recommendedName>
        <fullName evidence="1">N-succinylglutamate 5-semialdehyde dehydrogenase</fullName>
        <ecNumber evidence="1">1.2.1.71</ecNumber>
    </recommendedName>
    <alternativeName>
        <fullName evidence="1">Succinylglutamic semialdehyde dehydrogenase</fullName>
        <shortName evidence="1">SGSD</shortName>
    </alternativeName>
</protein>
<accession>Q4ZQH8</accession>
<organism>
    <name type="scientific">Pseudomonas syringae pv. syringae (strain B728a)</name>
    <dbReference type="NCBI Taxonomy" id="205918"/>
    <lineage>
        <taxon>Bacteria</taxon>
        <taxon>Pseudomonadati</taxon>
        <taxon>Pseudomonadota</taxon>
        <taxon>Gammaproteobacteria</taxon>
        <taxon>Pseudomonadales</taxon>
        <taxon>Pseudomonadaceae</taxon>
        <taxon>Pseudomonas</taxon>
        <taxon>Pseudomonas syringae</taxon>
    </lineage>
</organism>
<comment type="function">
    <text evidence="1">Catalyzes the NAD-dependent reduction of succinylglutamate semialdehyde into succinylglutamate.</text>
</comment>
<comment type="catalytic activity">
    <reaction evidence="1">
        <text>N-succinyl-L-glutamate 5-semialdehyde + NAD(+) + H2O = N-succinyl-L-glutamate + NADH + 2 H(+)</text>
        <dbReference type="Rhea" id="RHEA:10812"/>
        <dbReference type="ChEBI" id="CHEBI:15377"/>
        <dbReference type="ChEBI" id="CHEBI:15378"/>
        <dbReference type="ChEBI" id="CHEBI:57540"/>
        <dbReference type="ChEBI" id="CHEBI:57945"/>
        <dbReference type="ChEBI" id="CHEBI:58520"/>
        <dbReference type="ChEBI" id="CHEBI:58763"/>
        <dbReference type="EC" id="1.2.1.71"/>
    </reaction>
</comment>
<comment type="pathway">
    <text evidence="1">Amino-acid degradation; L-arginine degradation via AST pathway; L-glutamate and succinate from L-arginine: step 4/5.</text>
</comment>
<comment type="similarity">
    <text evidence="1">Belongs to the aldehyde dehydrogenase family. AstD subfamily.</text>
</comment>
<reference key="1">
    <citation type="journal article" date="2005" name="Proc. Natl. Acad. Sci. U.S.A.">
        <title>Comparison of the complete genome sequences of Pseudomonas syringae pv. syringae B728a and pv. tomato DC3000.</title>
        <authorList>
            <person name="Feil H."/>
            <person name="Feil W.S."/>
            <person name="Chain P."/>
            <person name="Larimer F."/>
            <person name="Dibartolo G."/>
            <person name="Copeland A."/>
            <person name="Lykidis A."/>
            <person name="Trong S."/>
            <person name="Nolan M."/>
            <person name="Goltsman E."/>
            <person name="Thiel J."/>
            <person name="Malfatti S."/>
            <person name="Loper J.E."/>
            <person name="Lapidus A."/>
            <person name="Detter J.C."/>
            <person name="Land M."/>
            <person name="Richardson P.M."/>
            <person name="Kyrpides N.C."/>
            <person name="Ivanova N."/>
            <person name="Lindow S.E."/>
        </authorList>
    </citation>
    <scope>NUCLEOTIDE SEQUENCE [LARGE SCALE GENOMIC DNA]</scope>
    <source>
        <strain>B728a</strain>
    </source>
</reference>
<gene>
    <name evidence="1" type="primary">astD</name>
    <name type="ordered locus">Psyr_3562</name>
</gene>